<feature type="chain" id="PRO_0000153863" description="Ribonuclease P protein component 4">
    <location>
        <begin position="1"/>
        <end position="106"/>
    </location>
</feature>
<feature type="binding site" evidence="1">
    <location>
        <position position="57"/>
    </location>
    <ligand>
        <name>Zn(2+)</name>
        <dbReference type="ChEBI" id="CHEBI:29105"/>
    </ligand>
</feature>
<feature type="binding site" evidence="1">
    <location>
        <position position="60"/>
    </location>
    <ligand>
        <name>Zn(2+)</name>
        <dbReference type="ChEBI" id="CHEBI:29105"/>
    </ligand>
</feature>
<feature type="binding site" evidence="1">
    <location>
        <position position="83"/>
    </location>
    <ligand>
        <name>Zn(2+)</name>
        <dbReference type="ChEBI" id="CHEBI:29105"/>
    </ligand>
</feature>
<feature type="binding site" evidence="1">
    <location>
        <position position="86"/>
    </location>
    <ligand>
        <name>Zn(2+)</name>
        <dbReference type="ChEBI" id="CHEBI:29105"/>
    </ligand>
</feature>
<keyword id="KW-0963">Cytoplasm</keyword>
<keyword id="KW-0255">Endonuclease</keyword>
<keyword id="KW-0378">Hydrolase</keyword>
<keyword id="KW-0479">Metal-binding</keyword>
<keyword id="KW-0540">Nuclease</keyword>
<keyword id="KW-1185">Reference proteome</keyword>
<keyword id="KW-0819">tRNA processing</keyword>
<keyword id="KW-0862">Zinc</keyword>
<comment type="function">
    <text evidence="1">Part of ribonuclease P, a protein complex that generates mature tRNA molecules by cleaving their 5'-ends.</text>
</comment>
<comment type="catalytic activity">
    <reaction evidence="1">
        <text>Endonucleolytic cleavage of RNA, removing 5'-extranucleotides from tRNA precursor.</text>
        <dbReference type="EC" id="3.1.26.5"/>
    </reaction>
</comment>
<comment type="cofactor">
    <cofactor evidence="1">
        <name>Zn(2+)</name>
        <dbReference type="ChEBI" id="CHEBI:29105"/>
    </cofactor>
    <text evidence="1">Binds 1 zinc ion per subunit.</text>
</comment>
<comment type="subunit">
    <text evidence="1">Consists of a catalytic RNA component and at least 4-5 protein subunits.</text>
</comment>
<comment type="subcellular location">
    <subcellularLocation>
        <location evidence="1">Cytoplasm</location>
    </subcellularLocation>
</comment>
<comment type="similarity">
    <text evidence="1">Belongs to the eukaryotic/archaeal RNase P protein component 4 family.</text>
</comment>
<dbReference type="EC" id="3.1.26.5" evidence="1"/>
<dbReference type="EMBL" id="AE006641">
    <property type="protein sequence ID" value="AAK42395.1"/>
    <property type="molecule type" value="Genomic_DNA"/>
</dbReference>
<dbReference type="PIR" id="D90392">
    <property type="entry name" value="D90392"/>
</dbReference>
<dbReference type="RefSeq" id="WP_009992052.1">
    <property type="nucleotide sequence ID" value="NC_002754.1"/>
</dbReference>
<dbReference type="SMR" id="Q97WJ1"/>
<dbReference type="STRING" id="273057.SSO2225"/>
<dbReference type="PaxDb" id="273057-SSO2225"/>
<dbReference type="EnsemblBacteria" id="AAK42395">
    <property type="protein sequence ID" value="AAK42395"/>
    <property type="gene ID" value="SSO2225"/>
</dbReference>
<dbReference type="KEGG" id="sso:SSO2225"/>
<dbReference type="PATRIC" id="fig|273057.12.peg.2321"/>
<dbReference type="eggNOG" id="arCOG04345">
    <property type="taxonomic scope" value="Archaea"/>
</dbReference>
<dbReference type="HOGENOM" id="CLU_079140_3_1_2"/>
<dbReference type="InParanoid" id="Q97WJ1"/>
<dbReference type="PhylomeDB" id="Q97WJ1"/>
<dbReference type="Proteomes" id="UP000001974">
    <property type="component" value="Chromosome"/>
</dbReference>
<dbReference type="GO" id="GO:0005737">
    <property type="term" value="C:cytoplasm"/>
    <property type="evidence" value="ECO:0007669"/>
    <property type="project" value="UniProtKB-SubCell"/>
</dbReference>
<dbReference type="GO" id="GO:0030677">
    <property type="term" value="C:ribonuclease P complex"/>
    <property type="evidence" value="ECO:0007669"/>
    <property type="project" value="UniProtKB-UniRule"/>
</dbReference>
<dbReference type="GO" id="GO:0004526">
    <property type="term" value="F:ribonuclease P activity"/>
    <property type="evidence" value="ECO:0007669"/>
    <property type="project" value="UniProtKB-UniRule"/>
</dbReference>
<dbReference type="GO" id="GO:0008270">
    <property type="term" value="F:zinc ion binding"/>
    <property type="evidence" value="ECO:0007669"/>
    <property type="project" value="UniProtKB-UniRule"/>
</dbReference>
<dbReference type="GO" id="GO:0001682">
    <property type="term" value="P:tRNA 5'-leader removal"/>
    <property type="evidence" value="ECO:0007669"/>
    <property type="project" value="UniProtKB-UniRule"/>
</dbReference>
<dbReference type="Gene3D" id="6.20.50.20">
    <property type="match status" value="1"/>
</dbReference>
<dbReference type="Gene3D" id="1.20.5.420">
    <property type="entry name" value="Immunoglobulin FC, subunit C"/>
    <property type="match status" value="1"/>
</dbReference>
<dbReference type="HAMAP" id="MF_00757">
    <property type="entry name" value="RNase_P_4"/>
    <property type="match status" value="1"/>
</dbReference>
<dbReference type="InterPro" id="IPR016432">
    <property type="entry name" value="RNP4"/>
</dbReference>
<dbReference type="InterPro" id="IPR007175">
    <property type="entry name" value="Rpr2/Snm1/Rpp21"/>
</dbReference>
<dbReference type="PANTHER" id="PTHR14742:SF0">
    <property type="entry name" value="RIBONUCLEASE P PROTEIN SUBUNIT P21"/>
    <property type="match status" value="1"/>
</dbReference>
<dbReference type="PANTHER" id="PTHR14742">
    <property type="entry name" value="RIBONUCLEASE P SUBUNIT P21"/>
    <property type="match status" value="1"/>
</dbReference>
<dbReference type="Pfam" id="PF04032">
    <property type="entry name" value="Rpr2"/>
    <property type="match status" value="1"/>
</dbReference>
<dbReference type="PIRSF" id="PIRSF004878">
    <property type="entry name" value="RNase_P_4"/>
    <property type="match status" value="1"/>
</dbReference>
<organism>
    <name type="scientific">Saccharolobus solfataricus (strain ATCC 35092 / DSM 1617 / JCM 11322 / P2)</name>
    <name type="common">Sulfolobus solfataricus</name>
    <dbReference type="NCBI Taxonomy" id="273057"/>
    <lineage>
        <taxon>Archaea</taxon>
        <taxon>Thermoproteota</taxon>
        <taxon>Thermoprotei</taxon>
        <taxon>Sulfolobales</taxon>
        <taxon>Sulfolobaceae</taxon>
        <taxon>Saccharolobus</taxon>
    </lineage>
</organism>
<accession>Q97WJ1</accession>
<name>RNP4_SACS2</name>
<protein>
    <recommendedName>
        <fullName evidence="1">Ribonuclease P protein component 4</fullName>
        <shortName evidence="1">RNase P component 4</shortName>
        <ecNumber evidence="1">3.1.26.5</ecNumber>
    </recommendedName>
    <alternativeName>
        <fullName evidence="1">Rpp21</fullName>
    </alternativeName>
</protein>
<sequence length="106" mass="12788">MRRKNQIKKRIIELIELAYNTAKSGNLELAREYVKLAEMYSRKGKVEIPLKYKRMFCRKCYTPLIIGVTERRRMRSKILIRTCLICNWQRRYVLSGNKRSDKENES</sequence>
<reference key="1">
    <citation type="journal article" date="2001" name="Proc. Natl. Acad. Sci. U.S.A.">
        <title>The complete genome of the crenarchaeon Sulfolobus solfataricus P2.</title>
        <authorList>
            <person name="She Q."/>
            <person name="Singh R.K."/>
            <person name="Confalonieri F."/>
            <person name="Zivanovic Y."/>
            <person name="Allard G."/>
            <person name="Awayez M.J."/>
            <person name="Chan-Weiher C.C.-Y."/>
            <person name="Clausen I.G."/>
            <person name="Curtis B.A."/>
            <person name="De Moors A."/>
            <person name="Erauso G."/>
            <person name="Fletcher C."/>
            <person name="Gordon P.M.K."/>
            <person name="Heikamp-de Jong I."/>
            <person name="Jeffries A.C."/>
            <person name="Kozera C.J."/>
            <person name="Medina N."/>
            <person name="Peng X."/>
            <person name="Thi-Ngoc H.P."/>
            <person name="Redder P."/>
            <person name="Schenk M.E."/>
            <person name="Theriault C."/>
            <person name="Tolstrup N."/>
            <person name="Charlebois R.L."/>
            <person name="Doolittle W.F."/>
            <person name="Duguet M."/>
            <person name="Gaasterland T."/>
            <person name="Garrett R.A."/>
            <person name="Ragan M.A."/>
            <person name="Sensen C.W."/>
            <person name="Van der Oost J."/>
        </authorList>
    </citation>
    <scope>NUCLEOTIDE SEQUENCE [LARGE SCALE GENOMIC DNA]</scope>
    <source>
        <strain>ATCC 35092 / DSM 1617 / JCM 11322 / P2</strain>
    </source>
</reference>
<gene>
    <name evidence="1" type="primary">rnp4</name>
    <name type="ordered locus">SSO2225</name>
</gene>
<evidence type="ECO:0000255" key="1">
    <source>
        <dbReference type="HAMAP-Rule" id="MF_00757"/>
    </source>
</evidence>
<proteinExistence type="inferred from homology"/>